<sequence>MSKSLTIIWQYLRAFVLIYACLYAGIFIAGLLPITIPGSIIGMLILFVLLALQIMPPQWVNPGCNILIRYMALLFVPIGVGVMQYWDLLRAQLGPVVISCAISTLVVFVVVSWSSHLVHGERKVIGQKGKEE</sequence>
<proteinExistence type="inferred from homology"/>
<gene>
    <name type="ordered locus">KPN78578_25390</name>
    <name type="ORF">KPN_02582</name>
</gene>
<comment type="subcellular location">
    <subcellularLocation>
        <location evidence="1">Cell inner membrane</location>
        <topology evidence="1">Multi-pass membrane protein</topology>
    </subcellularLocation>
</comment>
<comment type="similarity">
    <text evidence="1">Belongs to the UPF0299 family.</text>
</comment>
<name>Y2539_KLEP7</name>
<accession>A6TBM9</accession>
<organism>
    <name type="scientific">Klebsiella pneumoniae subsp. pneumoniae (strain ATCC 700721 / MGH 78578)</name>
    <dbReference type="NCBI Taxonomy" id="272620"/>
    <lineage>
        <taxon>Bacteria</taxon>
        <taxon>Pseudomonadati</taxon>
        <taxon>Pseudomonadota</taxon>
        <taxon>Gammaproteobacteria</taxon>
        <taxon>Enterobacterales</taxon>
        <taxon>Enterobacteriaceae</taxon>
        <taxon>Klebsiella/Raoultella group</taxon>
        <taxon>Klebsiella</taxon>
        <taxon>Klebsiella pneumoniae complex</taxon>
    </lineage>
</organism>
<dbReference type="EMBL" id="CP000647">
    <property type="protein sequence ID" value="ABR78000.1"/>
    <property type="molecule type" value="Genomic_DNA"/>
</dbReference>
<dbReference type="RefSeq" id="WP_002912865.1">
    <property type="nucleotide sequence ID" value="NC_009648.1"/>
</dbReference>
<dbReference type="SMR" id="A6TBM9"/>
<dbReference type="STRING" id="272620.KPN_02582"/>
<dbReference type="PaxDb" id="272620-KPN_02582"/>
<dbReference type="EnsemblBacteria" id="ABR78000">
    <property type="protein sequence ID" value="ABR78000"/>
    <property type="gene ID" value="KPN_02582"/>
</dbReference>
<dbReference type="KEGG" id="kpn:KPN_02582"/>
<dbReference type="HOGENOM" id="CLU_113736_1_1_6"/>
<dbReference type="Proteomes" id="UP000000265">
    <property type="component" value="Chromosome"/>
</dbReference>
<dbReference type="GO" id="GO:0005886">
    <property type="term" value="C:plasma membrane"/>
    <property type="evidence" value="ECO:0007669"/>
    <property type="project" value="UniProtKB-SubCell"/>
</dbReference>
<dbReference type="HAMAP" id="MF_01144">
    <property type="entry name" value="UPF0299"/>
    <property type="match status" value="1"/>
</dbReference>
<dbReference type="InterPro" id="IPR005538">
    <property type="entry name" value="LrgA/CidA"/>
</dbReference>
<dbReference type="InterPro" id="IPR022957">
    <property type="entry name" value="Uncharacterised_UPF0299"/>
</dbReference>
<dbReference type="NCBIfam" id="NF002494">
    <property type="entry name" value="PRK01821.1"/>
    <property type="match status" value="1"/>
</dbReference>
<dbReference type="PANTHER" id="PTHR33931">
    <property type="entry name" value="HOLIN-LIKE PROTEIN CIDA-RELATED"/>
    <property type="match status" value="1"/>
</dbReference>
<dbReference type="PANTHER" id="PTHR33931:SF5">
    <property type="entry name" value="UPF0299 MEMBRANE PROTEIN YOHJ"/>
    <property type="match status" value="1"/>
</dbReference>
<dbReference type="Pfam" id="PF03788">
    <property type="entry name" value="LrgA"/>
    <property type="match status" value="1"/>
</dbReference>
<evidence type="ECO:0000255" key="1">
    <source>
        <dbReference type="HAMAP-Rule" id="MF_01144"/>
    </source>
</evidence>
<reference key="1">
    <citation type="submission" date="2006-09" db="EMBL/GenBank/DDBJ databases">
        <authorList>
            <consortium name="The Klebsiella pneumonia Genome Sequencing Project"/>
            <person name="McClelland M."/>
            <person name="Sanderson E.K."/>
            <person name="Spieth J."/>
            <person name="Clifton W.S."/>
            <person name="Latreille P."/>
            <person name="Sabo A."/>
            <person name="Pepin K."/>
            <person name="Bhonagiri V."/>
            <person name="Porwollik S."/>
            <person name="Ali J."/>
            <person name="Wilson R.K."/>
        </authorList>
    </citation>
    <scope>NUCLEOTIDE SEQUENCE [LARGE SCALE GENOMIC DNA]</scope>
    <source>
        <strain>ATCC 700721 / MGH 78578</strain>
    </source>
</reference>
<feature type="chain" id="PRO_1000065461" description="UPF0299 membrane protein KPN78578_25390">
    <location>
        <begin position="1"/>
        <end position="132"/>
    </location>
</feature>
<feature type="transmembrane region" description="Helical" evidence="1">
    <location>
        <begin position="5"/>
        <end position="25"/>
    </location>
</feature>
<feature type="transmembrane region" description="Helical" evidence="1">
    <location>
        <begin position="38"/>
        <end position="60"/>
    </location>
</feature>
<feature type="transmembrane region" description="Helical" evidence="1">
    <location>
        <begin position="66"/>
        <end position="86"/>
    </location>
</feature>
<feature type="transmembrane region" description="Helical" evidence="1">
    <location>
        <begin position="93"/>
        <end position="113"/>
    </location>
</feature>
<keyword id="KW-0997">Cell inner membrane</keyword>
<keyword id="KW-1003">Cell membrane</keyword>
<keyword id="KW-0472">Membrane</keyword>
<keyword id="KW-0812">Transmembrane</keyword>
<keyword id="KW-1133">Transmembrane helix</keyword>
<protein>
    <recommendedName>
        <fullName evidence="1">UPF0299 membrane protein KPN78578_25390</fullName>
    </recommendedName>
</protein>